<dbReference type="EMBL" id="X15725">
    <property type="protein sequence ID" value="CAB57793.1"/>
    <property type="molecule type" value="mRNA"/>
</dbReference>
<dbReference type="EMBL" id="X58823">
    <property type="protein sequence ID" value="CAA41627.1"/>
    <property type="molecule type" value="Genomic_DNA"/>
</dbReference>
<dbReference type="EMBL" id="U58655">
    <property type="protein sequence ID" value="AAC48719.1"/>
    <property type="molecule type" value="Genomic_DNA"/>
</dbReference>
<dbReference type="EMBL" id="AY911320">
    <property type="protein sequence ID" value="AAW82088.1"/>
    <property type="molecule type" value="mRNA"/>
</dbReference>
<dbReference type="EMBL" id="BC102263">
    <property type="protein sequence ID" value="AAI02264.1"/>
    <property type="molecule type" value="mRNA"/>
</dbReference>
<dbReference type="PIR" id="JH0473">
    <property type="entry name" value="OSBO8A"/>
</dbReference>
<dbReference type="RefSeq" id="XP_005209785.1">
    <property type="nucleotide sequence ID" value="XM_005209728.5"/>
</dbReference>
<dbReference type="RefSeq" id="XP_010797710.1">
    <property type="nucleotide sequence ID" value="XM_010799408.2"/>
</dbReference>
<dbReference type="RefSeq" id="XP_010805898.1">
    <property type="nucleotide sequence ID" value="XM_010807596.2"/>
</dbReference>
<dbReference type="RefSeq" id="XP_010814166.1">
    <property type="nucleotide sequence ID" value="XM_010815864.2"/>
</dbReference>
<dbReference type="RefSeq" id="XP_010821463.1">
    <property type="nucleotide sequence ID" value="XM_010823161.2"/>
</dbReference>
<dbReference type="RefSeq" id="XP_010822314.2">
    <property type="nucleotide sequence ID" value="XM_010824012.2"/>
</dbReference>
<dbReference type="RefSeq" id="XP_015319858.1">
    <property type="nucleotide sequence ID" value="XM_015464372.1"/>
</dbReference>
<dbReference type="PDB" id="1OCC">
    <property type="method" value="X-ray"/>
    <property type="resolution" value="2.80 A"/>
    <property type="chains" value="L/Y=17-63"/>
</dbReference>
<dbReference type="PDB" id="1OCO">
    <property type="method" value="X-ray"/>
    <property type="resolution" value="2.80 A"/>
    <property type="chains" value="L/Y=17-63"/>
</dbReference>
<dbReference type="PDB" id="1OCR">
    <property type="method" value="X-ray"/>
    <property type="resolution" value="2.35 A"/>
    <property type="chains" value="L/Y=17-63"/>
</dbReference>
<dbReference type="PDB" id="1OCZ">
    <property type="method" value="X-ray"/>
    <property type="resolution" value="2.90 A"/>
    <property type="chains" value="L/Y=17-63"/>
</dbReference>
<dbReference type="PDB" id="1V54">
    <property type="method" value="X-ray"/>
    <property type="resolution" value="1.80 A"/>
    <property type="chains" value="L/Y=17-63"/>
</dbReference>
<dbReference type="PDB" id="1V55">
    <property type="method" value="X-ray"/>
    <property type="resolution" value="1.90 A"/>
    <property type="chains" value="L/Y=17-63"/>
</dbReference>
<dbReference type="PDB" id="2DYR">
    <property type="method" value="X-ray"/>
    <property type="resolution" value="1.80 A"/>
    <property type="chains" value="L/Y=17-63"/>
</dbReference>
<dbReference type="PDB" id="2DYS">
    <property type="method" value="X-ray"/>
    <property type="resolution" value="2.20 A"/>
    <property type="chains" value="L/Y=17-63"/>
</dbReference>
<dbReference type="PDB" id="2EIJ">
    <property type="method" value="X-ray"/>
    <property type="resolution" value="1.90 A"/>
    <property type="chains" value="L/Y=17-63"/>
</dbReference>
<dbReference type="PDB" id="2EIK">
    <property type="method" value="X-ray"/>
    <property type="resolution" value="2.10 A"/>
    <property type="chains" value="L/Y=17-63"/>
</dbReference>
<dbReference type="PDB" id="2EIL">
    <property type="method" value="X-ray"/>
    <property type="resolution" value="2.10 A"/>
    <property type="chains" value="L/Y=17-63"/>
</dbReference>
<dbReference type="PDB" id="2EIM">
    <property type="method" value="X-ray"/>
    <property type="resolution" value="2.60 A"/>
    <property type="chains" value="L/Y=17-63"/>
</dbReference>
<dbReference type="PDB" id="2EIN">
    <property type="method" value="X-ray"/>
    <property type="resolution" value="2.70 A"/>
    <property type="chains" value="L/Y=17-63"/>
</dbReference>
<dbReference type="PDB" id="2OCC">
    <property type="method" value="X-ray"/>
    <property type="resolution" value="2.30 A"/>
    <property type="chains" value="L/Y=17-63"/>
</dbReference>
<dbReference type="PDB" id="2Y69">
    <property type="method" value="X-ray"/>
    <property type="resolution" value="1.95 A"/>
    <property type="chains" value="L/Y=1-63"/>
</dbReference>
<dbReference type="PDB" id="2YBB">
    <property type="method" value="EM"/>
    <property type="resolution" value="19.00 A"/>
    <property type="chains" value="W=17-63"/>
</dbReference>
<dbReference type="PDB" id="2ZXW">
    <property type="method" value="X-ray"/>
    <property type="resolution" value="2.50 A"/>
    <property type="chains" value="L/Y=17-63"/>
</dbReference>
<dbReference type="PDB" id="3ABK">
    <property type="method" value="X-ray"/>
    <property type="resolution" value="2.00 A"/>
    <property type="chains" value="L/Y=17-63"/>
</dbReference>
<dbReference type="PDB" id="3ABL">
    <property type="method" value="X-ray"/>
    <property type="resolution" value="2.10 A"/>
    <property type="chains" value="L/Y=17-63"/>
</dbReference>
<dbReference type="PDB" id="3ABM">
    <property type="method" value="X-ray"/>
    <property type="resolution" value="1.95 A"/>
    <property type="chains" value="L/Y=17-63"/>
</dbReference>
<dbReference type="PDB" id="3AG1">
    <property type="method" value="X-ray"/>
    <property type="resolution" value="2.20 A"/>
    <property type="chains" value="L/Y=17-63"/>
</dbReference>
<dbReference type="PDB" id="3AG2">
    <property type="method" value="X-ray"/>
    <property type="resolution" value="1.80 A"/>
    <property type="chains" value="L/Y=17-63"/>
</dbReference>
<dbReference type="PDB" id="3AG3">
    <property type="method" value="X-ray"/>
    <property type="resolution" value="1.80 A"/>
    <property type="chains" value="L/Y=17-63"/>
</dbReference>
<dbReference type="PDB" id="3AG4">
    <property type="method" value="X-ray"/>
    <property type="resolution" value="2.05 A"/>
    <property type="chains" value="L/Y=17-63"/>
</dbReference>
<dbReference type="PDB" id="3ASN">
    <property type="method" value="X-ray"/>
    <property type="resolution" value="3.00 A"/>
    <property type="chains" value="L/Y=17-63"/>
</dbReference>
<dbReference type="PDB" id="3ASO">
    <property type="method" value="X-ray"/>
    <property type="resolution" value="2.30 A"/>
    <property type="chains" value="L/Y=17-63"/>
</dbReference>
<dbReference type="PDB" id="3WG7">
    <property type="method" value="X-ray"/>
    <property type="resolution" value="1.90 A"/>
    <property type="chains" value="L/Y=17-63"/>
</dbReference>
<dbReference type="PDB" id="3X2Q">
    <property type="method" value="X-ray"/>
    <property type="resolution" value="2.00 A"/>
    <property type="chains" value="L/Y=17-63"/>
</dbReference>
<dbReference type="PDB" id="5B1A">
    <property type="method" value="X-ray"/>
    <property type="resolution" value="1.50 A"/>
    <property type="chains" value="L/Y=17-63"/>
</dbReference>
<dbReference type="PDB" id="5B1B">
    <property type="method" value="X-ray"/>
    <property type="resolution" value="1.60 A"/>
    <property type="chains" value="L/Y=17-63"/>
</dbReference>
<dbReference type="PDB" id="5B3S">
    <property type="method" value="X-ray"/>
    <property type="resolution" value="1.68 A"/>
    <property type="chains" value="L/Y=17-63"/>
</dbReference>
<dbReference type="PDB" id="5GPN">
    <property type="method" value="EM"/>
    <property type="resolution" value="5.40 A"/>
    <property type="chains" value="9=17-63"/>
</dbReference>
<dbReference type="PDB" id="5IY5">
    <property type="method" value="X-ray"/>
    <property type="resolution" value="2.00 A"/>
    <property type="chains" value="L/Y=18-63"/>
</dbReference>
<dbReference type="PDB" id="5LUF">
    <property type="method" value="EM"/>
    <property type="resolution" value="9.10 A"/>
    <property type="chains" value="9=17-63"/>
</dbReference>
<dbReference type="PDB" id="5W97">
    <property type="method" value="X-ray"/>
    <property type="resolution" value="2.30 A"/>
    <property type="chains" value="L/l=17-63"/>
</dbReference>
<dbReference type="PDB" id="5WAU">
    <property type="method" value="X-ray"/>
    <property type="resolution" value="1.95 A"/>
    <property type="chains" value="L/l=17-63"/>
</dbReference>
<dbReference type="PDB" id="5X19">
    <property type="method" value="X-ray"/>
    <property type="resolution" value="2.20 A"/>
    <property type="chains" value="L/Y=17-63"/>
</dbReference>
<dbReference type="PDB" id="5X1B">
    <property type="method" value="X-ray"/>
    <property type="resolution" value="2.40 A"/>
    <property type="chains" value="L/Y=17-63"/>
</dbReference>
<dbReference type="PDB" id="5X1F">
    <property type="method" value="X-ray"/>
    <property type="resolution" value="2.20 A"/>
    <property type="chains" value="L/Y=17-63"/>
</dbReference>
<dbReference type="PDB" id="5XDQ">
    <property type="method" value="X-ray"/>
    <property type="resolution" value="1.77 A"/>
    <property type="chains" value="L/Y=17-63"/>
</dbReference>
<dbReference type="PDB" id="5XDX">
    <property type="method" value="X-ray"/>
    <property type="resolution" value="1.99 A"/>
    <property type="chains" value="L/Y=17-63"/>
</dbReference>
<dbReference type="PDB" id="5XTH">
    <property type="method" value="EM"/>
    <property type="resolution" value="3.90 A"/>
    <property type="chains" value="8=17-63"/>
</dbReference>
<dbReference type="PDB" id="5XTI">
    <property type="method" value="EM"/>
    <property type="resolution" value="17.40 A"/>
    <property type="chains" value="8/B8=17-63"/>
</dbReference>
<dbReference type="PDB" id="5Z84">
    <property type="method" value="X-ray"/>
    <property type="resolution" value="1.85 A"/>
    <property type="chains" value="L/Y=17-63"/>
</dbReference>
<dbReference type="PDB" id="5Z85">
    <property type="method" value="X-ray"/>
    <property type="resolution" value="1.85 A"/>
    <property type="chains" value="L/Y=17-63"/>
</dbReference>
<dbReference type="PDB" id="5Z86">
    <property type="method" value="X-ray"/>
    <property type="resolution" value="1.85 A"/>
    <property type="chains" value="L/Y=17-63"/>
</dbReference>
<dbReference type="PDB" id="5ZCO">
    <property type="method" value="X-ray"/>
    <property type="resolution" value="1.90 A"/>
    <property type="chains" value="L/Y=17-63"/>
</dbReference>
<dbReference type="PDB" id="5ZCP">
    <property type="method" value="X-ray"/>
    <property type="resolution" value="1.65 A"/>
    <property type="chains" value="L/Y=17-63"/>
</dbReference>
<dbReference type="PDB" id="5ZCQ">
    <property type="method" value="X-ray"/>
    <property type="resolution" value="1.65 A"/>
    <property type="chains" value="L/Y=17-63"/>
</dbReference>
<dbReference type="PDB" id="6J8M">
    <property type="method" value="X-ray"/>
    <property type="resolution" value="1.90 A"/>
    <property type="chains" value="L/Y=17-63"/>
</dbReference>
<dbReference type="PDB" id="6JUW">
    <property type="method" value="X-ray"/>
    <property type="resolution" value="1.80 A"/>
    <property type="chains" value="L/Y=18-63"/>
</dbReference>
<dbReference type="PDB" id="6JY3">
    <property type="method" value="X-ray"/>
    <property type="resolution" value="1.85 A"/>
    <property type="chains" value="L=17-63"/>
</dbReference>
<dbReference type="PDB" id="6JY4">
    <property type="method" value="X-ray"/>
    <property type="resolution" value="1.95 A"/>
    <property type="chains" value="L=17-63"/>
</dbReference>
<dbReference type="PDB" id="6NKN">
    <property type="method" value="X-ray"/>
    <property type="resolution" value="2.50 A"/>
    <property type="chains" value="L/Y=17-63"/>
</dbReference>
<dbReference type="PDB" id="6NMF">
    <property type="method" value="X-ray"/>
    <property type="resolution" value="2.80 A"/>
    <property type="chains" value="L/Y=17-63"/>
</dbReference>
<dbReference type="PDB" id="6NMP">
    <property type="method" value="X-ray"/>
    <property type="resolution" value="2.90 A"/>
    <property type="chains" value="L/Y=17-63"/>
</dbReference>
<dbReference type="PDB" id="7COH">
    <property type="method" value="X-ray"/>
    <property type="resolution" value="1.30 A"/>
    <property type="chains" value="L/Y=17-63"/>
</dbReference>
<dbReference type="PDB" id="7CP5">
    <property type="method" value="X-ray"/>
    <property type="resolution" value="1.76 A"/>
    <property type="chains" value="L/Y=18-63"/>
</dbReference>
<dbReference type="PDB" id="7D5W">
    <property type="method" value="X-ray"/>
    <property type="resolution" value="1.84 A"/>
    <property type="chains" value="L/Y=18-63"/>
</dbReference>
<dbReference type="PDB" id="7D5X">
    <property type="method" value="X-ray"/>
    <property type="resolution" value="1.74 A"/>
    <property type="chains" value="L/Y=18-63"/>
</dbReference>
<dbReference type="PDB" id="7DGQ">
    <property type="method" value="EM"/>
    <property type="resolution" value="5.00 A"/>
    <property type="chains" value="A0=1-63"/>
</dbReference>
<dbReference type="PDB" id="7DGR">
    <property type="method" value="EM"/>
    <property type="resolution" value="4.60 A"/>
    <property type="chains" value="C1=1-63"/>
</dbReference>
<dbReference type="PDB" id="7DGS">
    <property type="method" value="EM"/>
    <property type="resolution" value="7.80 A"/>
    <property type="chains" value="B1=1-63"/>
</dbReference>
<dbReference type="PDB" id="7DKF">
    <property type="method" value="EM"/>
    <property type="resolution" value="8.30 A"/>
    <property type="chains" value="L3=1-63"/>
</dbReference>
<dbReference type="PDB" id="7EV7">
    <property type="method" value="X-ray"/>
    <property type="resolution" value="1.70 A"/>
    <property type="chains" value="L/Y=17-63"/>
</dbReference>
<dbReference type="PDB" id="7THU">
    <property type="method" value="X-ray"/>
    <property type="resolution" value="1.93 A"/>
    <property type="chains" value="LLL/YYY=17-63"/>
</dbReference>
<dbReference type="PDB" id="7TIE">
    <property type="method" value="X-ray"/>
    <property type="resolution" value="1.90 A"/>
    <property type="chains" value="LLL/YYY=17-63"/>
</dbReference>
<dbReference type="PDB" id="7TIH">
    <property type="method" value="X-ray"/>
    <property type="resolution" value="2.35 A"/>
    <property type="chains" value="LLL/YYY=17-63"/>
</dbReference>
<dbReference type="PDB" id="7TII">
    <property type="method" value="X-ray"/>
    <property type="resolution" value="2.45 A"/>
    <property type="chains" value="LLL/YYY=17-63"/>
</dbReference>
<dbReference type="PDB" id="7VUW">
    <property type="method" value="X-ray"/>
    <property type="resolution" value="1.60 A"/>
    <property type="chains" value="L/Y=18-63"/>
</dbReference>
<dbReference type="PDB" id="7VVR">
    <property type="method" value="X-ray"/>
    <property type="resolution" value="1.65 A"/>
    <property type="chains" value="L/Y=18-63"/>
</dbReference>
<dbReference type="PDB" id="7W3E">
    <property type="method" value="X-ray"/>
    <property type="resolution" value="1.45 A"/>
    <property type="chains" value="L/Y=18-63"/>
</dbReference>
<dbReference type="PDB" id="7XMA">
    <property type="method" value="X-ray"/>
    <property type="resolution" value="2.20 A"/>
    <property type="chains" value="L/Y=17-63"/>
</dbReference>
<dbReference type="PDB" id="7XMB">
    <property type="method" value="X-ray"/>
    <property type="resolution" value="2.20 A"/>
    <property type="chains" value="L/Y=17-63"/>
</dbReference>
<dbReference type="PDB" id="7Y44">
    <property type="method" value="X-ray"/>
    <property type="resolution" value="1.90 A"/>
    <property type="chains" value="L/Y=17-63"/>
</dbReference>
<dbReference type="PDB" id="7YPY">
    <property type="method" value="X-ray"/>
    <property type="resolution" value="1.50 A"/>
    <property type="chains" value="L/Y=17-63"/>
</dbReference>
<dbReference type="PDB" id="8D4T">
    <property type="method" value="EM"/>
    <property type="resolution" value="3.10 A"/>
    <property type="chains" value="Y=18-63"/>
</dbReference>
<dbReference type="PDB" id="8GBT">
    <property type="method" value="X-ray"/>
    <property type="resolution" value="2.80 A"/>
    <property type="chains" value="L/Y=17-63"/>
</dbReference>
<dbReference type="PDB" id="8GCQ">
    <property type="method" value="X-ray"/>
    <property type="resolution" value="2.38 A"/>
    <property type="chains" value="L/Y=17-63"/>
</dbReference>
<dbReference type="PDB" id="8GVM">
    <property type="method" value="X-ray"/>
    <property type="resolution" value="1.85 A"/>
    <property type="chains" value="L/Y=17-63"/>
</dbReference>
<dbReference type="PDB" id="8H8R">
    <property type="method" value="X-ray"/>
    <property type="resolution" value="1.70 A"/>
    <property type="chains" value="L/Y=17-63"/>
</dbReference>
<dbReference type="PDB" id="8H8S">
    <property type="method" value="X-ray"/>
    <property type="resolution" value="1.70 A"/>
    <property type="chains" value="L/Y=17-63"/>
</dbReference>
<dbReference type="PDB" id="8IJN">
    <property type="method" value="X-ray"/>
    <property type="resolution" value="1.80 A"/>
    <property type="chains" value="L/Y=17-63"/>
</dbReference>
<dbReference type="PDBsum" id="1OCC"/>
<dbReference type="PDBsum" id="1OCO"/>
<dbReference type="PDBsum" id="1OCR"/>
<dbReference type="PDBsum" id="1OCZ"/>
<dbReference type="PDBsum" id="1V54"/>
<dbReference type="PDBsum" id="1V55"/>
<dbReference type="PDBsum" id="2DYR"/>
<dbReference type="PDBsum" id="2DYS"/>
<dbReference type="PDBsum" id="2EIJ"/>
<dbReference type="PDBsum" id="2EIK"/>
<dbReference type="PDBsum" id="2EIL"/>
<dbReference type="PDBsum" id="2EIM"/>
<dbReference type="PDBsum" id="2EIN"/>
<dbReference type="PDBsum" id="2OCC"/>
<dbReference type="PDBsum" id="2Y69"/>
<dbReference type="PDBsum" id="2YBB"/>
<dbReference type="PDBsum" id="2ZXW"/>
<dbReference type="PDBsum" id="3ABK"/>
<dbReference type="PDBsum" id="3ABL"/>
<dbReference type="PDBsum" id="3ABM"/>
<dbReference type="PDBsum" id="3AG1"/>
<dbReference type="PDBsum" id="3AG2"/>
<dbReference type="PDBsum" id="3AG3"/>
<dbReference type="PDBsum" id="3AG4"/>
<dbReference type="PDBsum" id="3ASN"/>
<dbReference type="PDBsum" id="3ASO"/>
<dbReference type="PDBsum" id="3WG7"/>
<dbReference type="PDBsum" id="3X2Q"/>
<dbReference type="PDBsum" id="5B1A"/>
<dbReference type="PDBsum" id="5B1B"/>
<dbReference type="PDBsum" id="5B3S"/>
<dbReference type="PDBsum" id="5GPN"/>
<dbReference type="PDBsum" id="5IY5"/>
<dbReference type="PDBsum" id="5LUF"/>
<dbReference type="PDBsum" id="5W97"/>
<dbReference type="PDBsum" id="5WAU"/>
<dbReference type="PDBsum" id="5X19"/>
<dbReference type="PDBsum" id="5X1B"/>
<dbReference type="PDBsum" id="5X1F"/>
<dbReference type="PDBsum" id="5XDQ"/>
<dbReference type="PDBsum" id="5XDX"/>
<dbReference type="PDBsum" id="5XTH"/>
<dbReference type="PDBsum" id="5XTI"/>
<dbReference type="PDBsum" id="5Z84"/>
<dbReference type="PDBsum" id="5Z85"/>
<dbReference type="PDBsum" id="5Z86"/>
<dbReference type="PDBsum" id="5ZCO"/>
<dbReference type="PDBsum" id="5ZCP"/>
<dbReference type="PDBsum" id="5ZCQ"/>
<dbReference type="PDBsum" id="6J8M"/>
<dbReference type="PDBsum" id="6JUW"/>
<dbReference type="PDBsum" id="6JY3"/>
<dbReference type="PDBsum" id="6JY4"/>
<dbReference type="PDBsum" id="6NKN"/>
<dbReference type="PDBsum" id="6NMF"/>
<dbReference type="PDBsum" id="6NMP"/>
<dbReference type="PDBsum" id="7COH"/>
<dbReference type="PDBsum" id="7CP5"/>
<dbReference type="PDBsum" id="7D5W"/>
<dbReference type="PDBsum" id="7D5X"/>
<dbReference type="PDBsum" id="7DGQ"/>
<dbReference type="PDBsum" id="7DGR"/>
<dbReference type="PDBsum" id="7DGS"/>
<dbReference type="PDBsum" id="7DKF"/>
<dbReference type="PDBsum" id="7EV7"/>
<dbReference type="PDBsum" id="7THU"/>
<dbReference type="PDBsum" id="7TIE"/>
<dbReference type="PDBsum" id="7TIH"/>
<dbReference type="PDBsum" id="7TII"/>
<dbReference type="PDBsum" id="7VUW"/>
<dbReference type="PDBsum" id="7VVR"/>
<dbReference type="PDBsum" id="7W3E"/>
<dbReference type="PDBsum" id="7XMA"/>
<dbReference type="PDBsum" id="7XMB"/>
<dbReference type="PDBsum" id="7Y44"/>
<dbReference type="PDBsum" id="7YPY"/>
<dbReference type="PDBsum" id="8D4T"/>
<dbReference type="PDBsum" id="8GBT"/>
<dbReference type="PDBsum" id="8GCQ"/>
<dbReference type="PDBsum" id="8GVM"/>
<dbReference type="PDBsum" id="8H8R"/>
<dbReference type="PDBsum" id="8H8S"/>
<dbReference type="PDBsum" id="8IJN"/>
<dbReference type="EMDB" id="EMD-27196"/>
<dbReference type="EMDB" id="EMD-30673"/>
<dbReference type="EMDB" id="EMD-30674"/>
<dbReference type="EMDB" id="EMD-30675"/>
<dbReference type="EMDB" id="EMD-30706"/>
<dbReference type="EMDB" id="EMD-4107"/>
<dbReference type="EMDB" id="EMD-9534"/>
<dbReference type="SMR" id="P00430"/>
<dbReference type="CORUM" id="P00430"/>
<dbReference type="DIP" id="DIP-60940N"/>
<dbReference type="FunCoup" id="P00430">
    <property type="interactions" value="1375"/>
</dbReference>
<dbReference type="IntAct" id="P00430">
    <property type="interactions" value="1"/>
</dbReference>
<dbReference type="STRING" id="9913.ENSBTAP00000059946"/>
<dbReference type="iPTMnet" id="P00430"/>
<dbReference type="PaxDb" id="9913-ENSBTAP00000048302"/>
<dbReference type="Ensembl" id="ENSBTAT00000052050.4">
    <property type="protein sequence ID" value="ENSBTAP00000048302.2"/>
    <property type="gene ID" value="ENSBTAG00000039555.4"/>
</dbReference>
<dbReference type="GeneID" id="327718"/>
<dbReference type="KEGG" id="bta:101902937"/>
<dbReference type="KEGG" id="bta:101903567"/>
<dbReference type="KEGG" id="bta:327718"/>
<dbReference type="CTD" id="1350"/>
<dbReference type="VEuPathDB" id="HostDB:ENSBTAG00000039555"/>
<dbReference type="eggNOG" id="KOG4527">
    <property type="taxonomic scope" value="Eukaryota"/>
</dbReference>
<dbReference type="GeneTree" id="ENSGT00390000018086"/>
<dbReference type="HOGENOM" id="CLU_194769_0_0_1"/>
<dbReference type="InParanoid" id="P00430"/>
<dbReference type="OMA" id="SIENKWR"/>
<dbReference type="OrthoDB" id="9974841at2759"/>
<dbReference type="TreeFam" id="TF105069"/>
<dbReference type="BRENDA" id="7.1.1.9">
    <property type="organism ID" value="908"/>
</dbReference>
<dbReference type="Reactome" id="R-BTA-5628897">
    <property type="pathway name" value="TP53 Regulates Metabolic Genes"/>
</dbReference>
<dbReference type="Reactome" id="R-BTA-611105">
    <property type="pathway name" value="Respiratory electron transport"/>
</dbReference>
<dbReference type="Reactome" id="R-BTA-9707564">
    <property type="pathway name" value="Cytoprotection by HMOX1"/>
</dbReference>
<dbReference type="Reactome" id="R-BTA-9864848">
    <property type="pathway name" value="Complex IV assembly"/>
</dbReference>
<dbReference type="UniPathway" id="UPA00705"/>
<dbReference type="EvolutionaryTrace" id="P00430"/>
<dbReference type="Proteomes" id="UP000009136">
    <property type="component" value="Chromosome 7"/>
</dbReference>
<dbReference type="Bgee" id="ENSBTAG00000039555">
    <property type="expression patterns" value="Expressed in cardiac ventricle and 107 other cell types or tissues"/>
</dbReference>
<dbReference type="GO" id="GO:0005743">
    <property type="term" value="C:mitochondrial inner membrane"/>
    <property type="evidence" value="ECO:0007669"/>
    <property type="project" value="UniProtKB-SubCell"/>
</dbReference>
<dbReference type="GO" id="GO:0045277">
    <property type="term" value="C:respiratory chain complex IV"/>
    <property type="evidence" value="ECO:0000314"/>
    <property type="project" value="UniProtKB"/>
</dbReference>
<dbReference type="GO" id="GO:0006123">
    <property type="term" value="P:mitochondrial electron transport, cytochrome c to oxygen"/>
    <property type="evidence" value="ECO:0000318"/>
    <property type="project" value="GO_Central"/>
</dbReference>
<dbReference type="CDD" id="cd00929">
    <property type="entry name" value="Cyt_c_Oxidase_VIIc"/>
    <property type="match status" value="1"/>
</dbReference>
<dbReference type="FunFam" id="4.10.49.10:FF:000001">
    <property type="entry name" value="Cytochrome c oxidase subunit 7C"/>
    <property type="match status" value="1"/>
</dbReference>
<dbReference type="Gene3D" id="4.10.49.10">
    <property type="entry name" value="Cytochrome c oxidase subunit VIIc"/>
    <property type="match status" value="1"/>
</dbReference>
<dbReference type="InterPro" id="IPR004202">
    <property type="entry name" value="COX7C/Cox8"/>
</dbReference>
<dbReference type="InterPro" id="IPR036636">
    <property type="entry name" value="COX7C/Cox8_sf"/>
</dbReference>
<dbReference type="PANTHER" id="PTHR13313:SF0">
    <property type="entry name" value="CYTOCHROME C OXIDASE SUBUNIT 7C, MITOCHONDRIAL"/>
    <property type="match status" value="1"/>
</dbReference>
<dbReference type="PANTHER" id="PTHR13313">
    <property type="entry name" value="CYTOCHROME C OXIDASE SUBUNIT VIIC"/>
    <property type="match status" value="1"/>
</dbReference>
<dbReference type="Pfam" id="PF02935">
    <property type="entry name" value="COX7C"/>
    <property type="match status" value="1"/>
</dbReference>
<dbReference type="SUPFAM" id="SSF81427">
    <property type="entry name" value="Mitochondrial cytochrome c oxidase subunit VIIc (aka VIIIa)"/>
    <property type="match status" value="1"/>
</dbReference>
<keyword id="KW-0002">3D-structure</keyword>
<keyword id="KW-0007">Acetylation</keyword>
<keyword id="KW-0903">Direct protein sequencing</keyword>
<keyword id="KW-0472">Membrane</keyword>
<keyword id="KW-0496">Mitochondrion</keyword>
<keyword id="KW-0999">Mitochondrion inner membrane</keyword>
<keyword id="KW-1185">Reference proteome</keyword>
<keyword id="KW-0809">Transit peptide</keyword>
<keyword id="KW-0812">Transmembrane</keyword>
<keyword id="KW-1133">Transmembrane helix</keyword>
<sequence length="63" mass="7331">MLGQSIRRFTTSVVRRSHYEEGPGKNIPFSVENKWRLLAMMTLFFGSGFAAPFFIVRHQLLKK</sequence>
<organism>
    <name type="scientific">Bos taurus</name>
    <name type="common">Bovine</name>
    <dbReference type="NCBI Taxonomy" id="9913"/>
    <lineage>
        <taxon>Eukaryota</taxon>
        <taxon>Metazoa</taxon>
        <taxon>Chordata</taxon>
        <taxon>Craniata</taxon>
        <taxon>Vertebrata</taxon>
        <taxon>Euteleostomi</taxon>
        <taxon>Mammalia</taxon>
        <taxon>Eutheria</taxon>
        <taxon>Laurasiatheria</taxon>
        <taxon>Artiodactyla</taxon>
        <taxon>Ruminantia</taxon>
        <taxon>Pecora</taxon>
        <taxon>Bovidae</taxon>
        <taxon>Bovinae</taxon>
        <taxon>Bos</taxon>
    </lineage>
</organism>
<accession>P00430</accession>
<accession>Q3T0U0</accession>
<accession>Q56K07</accession>
<protein>
    <recommendedName>
        <fullName>Cytochrome c oxidase subunit 7C, mitochondrial</fullName>
    </recommendedName>
    <alternativeName>
        <fullName>Cytochrome c oxidase polypeptide VIIIA</fullName>
    </alternativeName>
    <alternativeName>
        <fullName>Cytochrome c oxidase polypeptide VIIc</fullName>
    </alternativeName>
</protein>
<name>COX7C_BOVIN</name>
<feature type="transit peptide" description="Mitochondrion" evidence="4 8">
    <location>
        <begin position="1"/>
        <end position="16"/>
    </location>
</feature>
<feature type="chain" id="PRO_0000006162" description="Cytochrome c oxidase subunit 7C, mitochondrial">
    <location>
        <begin position="17"/>
        <end position="63"/>
    </location>
</feature>
<feature type="topological domain" description="Mitochondrial matrix" evidence="6">
    <location>
        <begin position="17"/>
        <end position="33"/>
    </location>
</feature>
<feature type="transmembrane region" description="Helical" evidence="6">
    <location>
        <begin position="34"/>
        <end position="60"/>
    </location>
</feature>
<feature type="topological domain" description="Mitochondrial intermembrane" evidence="6">
    <location>
        <begin position="61"/>
        <end position="63"/>
    </location>
</feature>
<feature type="modified residue" description="N6-acetyllysine; alternate" evidence="3">
    <location>
        <position position="25"/>
    </location>
</feature>
<feature type="modified residue" description="N6-succinyllysine; alternate" evidence="3">
    <location>
        <position position="25"/>
    </location>
</feature>
<feature type="turn" evidence="12">
    <location>
        <begin position="23"/>
        <end position="25"/>
    </location>
</feature>
<feature type="strand" evidence="12">
    <location>
        <begin position="26"/>
        <end position="29"/>
    </location>
</feature>
<feature type="helix" evidence="12">
    <location>
        <begin position="34"/>
        <end position="61"/>
    </location>
</feature>
<proteinExistence type="evidence at protein level"/>
<comment type="function">
    <text evidence="1">Component of the cytochrome c oxidase, the last enzyme in the mitochondrial electron transport chain which drives oxidative phosphorylation. The respiratory chain contains 3 multisubunit complexes succinate dehydrogenase (complex II, CII), ubiquinol-cytochrome c oxidoreductase (cytochrome b-c1 complex, complex III, CIII) and cytochrome c oxidase (complex IV, CIV), that cooperate to transfer electrons derived from NADH and succinate to molecular oxygen, creating an electrochemical gradient over the inner membrane that drives transmembrane transport and the ATP synthase. Cytochrome c oxidase is the component of the respiratory chain that catalyzes the reduction of oxygen to water. Electrons originating from reduced cytochrome c in the intermembrane space (IMS) are transferred via the dinuclear copper A center (CU(A)) of subunit 2 and heme A of subunit 1 to the active site in subunit 1, a binuclear center (BNC) formed by heme A3 and copper B (CU(B)). The BNC reduces molecular oxygen to 2 water molecules using 4 electrons from cytochrome c in the IMS and 4 protons from the mitochondrial matrix.</text>
</comment>
<comment type="pathway">
    <text evidence="1">Energy metabolism; oxidative phosphorylation.</text>
</comment>
<comment type="subunit">
    <text evidence="2 5 7 10">Component of the cytochrome c oxidase (complex IV, CIV), a multisubunit enzyme composed of 14 subunits. The complex is composed of a catalytic core of 3 subunits MT-CO1, MT-CO2 and MT-CO3, encoded in the mitochondrial DNA, and 11 supernumerary subunits COX4I1 (or COX4I2), COX5A, COX5B, COX6A2 (or COX6A1), COX6B1 (or COX6B2), COX6C, COX7A1 (or COX7A2), COX7B, COX7C, COX8B and NDUFA4, which are encoded in the nuclear genome (PubMed:8638158). The complex exists as a monomer or a dimer and forms supercomplexes (SCs) in the inner mitochondrial membrane with NADH-ubiquinone oxidoreductase (complex I, CI) and ubiquinol-cytochrome c oxidoreductase (cytochrome b-c1 complex, complex III, CIII), resulting in different assemblies (supercomplex SCI(1)III(2)IV(1) and megacomplex MCI(2)III(2)IV(2)) (PubMed:26698328, PubMed:27830641). Interacts with RAB5IF (By similarity).</text>
</comment>
<comment type="subcellular location">
    <subcellularLocation>
        <location evidence="6 9">Mitochondrion inner membrane</location>
        <topology evidence="6 9">Single-pass membrane protein</topology>
    </subcellularLocation>
</comment>
<comment type="tissue specificity">
    <text>Liver, heart, muscle and brain, contain the same isoform of COX VIIc, but at different concentrations.</text>
</comment>
<comment type="similarity">
    <text evidence="11">Belongs to the cytochrome c oxidase VIIc family.</text>
</comment>
<reference key="1">
    <citation type="journal article" date="1989" name="Nucleic Acids Res.">
        <title>Nucleotide sequence of a cDNA for bovine cytochrome c oxidase subunit VIIc.</title>
        <authorList>
            <person name="Aqua M.S."/>
            <person name="Lomax M.I."/>
            <person name="Schon E.A."/>
            <person name="Grossman L.I."/>
        </authorList>
    </citation>
    <scope>NUCLEOTIDE SEQUENCE [MRNA]</scope>
</reference>
<reference key="2">
    <citation type="journal article" date="1991" name="Gene">
        <title>Characterization and expression of a cDNA specifying subunit VIIc of bovine cytochrome c oxidase.</title>
        <authorList>
            <person name="Aqua M.S."/>
            <person name="Bachman N.J."/>
            <person name="Lomax M.I."/>
            <person name="Grossman L.I."/>
        </authorList>
    </citation>
    <scope>NUCLEOTIDE SEQUENCE [MRNA]</scope>
    <source>
        <tissue>Heart</tissue>
    </source>
</reference>
<reference key="3">
    <citation type="journal article" date="1997" name="J. Biol. Chem.">
        <title>Structural organization and promoter analysis of the bovine cytochrome c oxidase subunit VIIc gene. A functional role for YY1.</title>
        <authorList>
            <person name="Seelan R.S."/>
            <person name="Grossman L.I."/>
        </authorList>
    </citation>
    <scope>NUCLEOTIDE SEQUENCE [GENOMIC DNA]</scope>
</reference>
<reference key="4">
    <citation type="submission" date="2005-01" db="EMBL/GenBank/DDBJ databases">
        <title>Analysis of sequences obtained from constructed full-length bovine cDNA libraries.</title>
        <authorList>
            <person name="Yu J."/>
            <person name="Meng Y."/>
            <person name="Wang Z."/>
            <person name="Hansen C."/>
            <person name="Li C."/>
            <person name="Moore S.S."/>
        </authorList>
    </citation>
    <scope>NUCLEOTIDE SEQUENCE [LARGE SCALE MRNA]</scope>
    <source>
        <tissue>Lymphoid epithelium</tissue>
    </source>
</reference>
<reference key="5">
    <citation type="submission" date="2005-08" db="EMBL/GenBank/DDBJ databases">
        <authorList>
            <consortium name="NIH - Mammalian Gene Collection (MGC) project"/>
        </authorList>
    </citation>
    <scope>NUCLEOTIDE SEQUENCE [LARGE SCALE MRNA]</scope>
    <source>
        <strain>Crossbred X Angus</strain>
        <tissue>Ileum</tissue>
    </source>
</reference>
<reference key="6">
    <citation type="journal article" date="1978" name="Hoppe-Seyler's Z. Physiol. Chem.">
        <title>Studies on cytochrome c oxidase, II. The chemical constitution of a short polypeptide from the beef heart enzyme.</title>
        <authorList>
            <person name="Buse G."/>
            <person name="Steffens G.J."/>
        </authorList>
    </citation>
    <scope>PROTEIN SEQUENCE OF 17-63</scope>
    <source>
        <tissue>Heart</tissue>
    </source>
</reference>
<reference key="7">
    <citation type="journal article" date="1988" name="Biochemistry">
        <title>Tissue-specific differences between heart and liver cytochrome c oxidase.</title>
        <authorList>
            <person name="Yanamura W."/>
            <person name="Zhang Y.-Z."/>
            <person name="Takamiya S."/>
            <person name="Capaldi R.A."/>
        </authorList>
    </citation>
    <scope>PROTEIN SEQUENCE OF 17-42</scope>
    <source>
        <tissue>Liver</tissue>
    </source>
</reference>
<reference key="8">
    <citation type="journal article" date="2016" name="J. Biol. Chem.">
        <title>Purification of active respiratory supercomplex from bovine heart mitochondria enables functional studies.</title>
        <authorList>
            <person name="Shinzawa-Itoh K."/>
            <person name="Shimomura H."/>
            <person name="Yanagisawa S."/>
            <person name="Shimada S."/>
            <person name="Takahashi R."/>
            <person name="Oosaki M."/>
            <person name="Ogura T."/>
            <person name="Tsukihara T."/>
        </authorList>
    </citation>
    <scope>SUBUNIT</scope>
</reference>
<reference key="9">
    <citation type="journal article" date="1996" name="Science">
        <title>The whole structure of the 13-subunit oxidized cytochrome c oxidase at 2.8 A.</title>
        <authorList>
            <person name="Tsukihara T."/>
            <person name="Aoyama H."/>
            <person name="Yamashita E."/>
            <person name="Tomizaki T."/>
            <person name="Yamaguchi H."/>
            <person name="Shinzawa-Itoh K."/>
            <person name="Nakashima R."/>
            <person name="Yaono R."/>
            <person name="Yoshikawa S."/>
        </authorList>
    </citation>
    <scope>X-RAY CRYSTALLOGRAPHY (2.8 ANGSTROMS)</scope>
</reference>
<reference key="10">
    <citation type="journal article" date="1999" name="Acta Crystallogr. D">
        <title>Structure analysis of bovine heart cytochrome c oxidase at 2.8 A resolution.</title>
        <authorList>
            <person name="Tomizaki T."/>
            <person name="Yamashita E."/>
            <person name="Yamaguchi H."/>
            <person name="Aoyama H."/>
            <person name="Tsukihara T."/>
            <person name="Shinzawa-Itoh K."/>
            <person name="Nakashima R."/>
            <person name="Yaono R."/>
            <person name="Yoshikawa S."/>
        </authorList>
    </citation>
    <scope>X-RAY CRYSTALLOGRAPHY (2.8 ANGSTROMS)</scope>
    <source>
        <tissue>Heart</tissue>
    </source>
</reference>
<reference key="11">
    <citation type="journal article" date="2000" name="Acta Crystallogr. D">
        <title>X-ray structure of azide-bound fully oxidized cytochrome c oxidase from bovine heart at 2.9 A resolution.</title>
        <authorList>
            <person name="Fei M.J."/>
            <person name="Yamashita E."/>
            <person name="Inoue N."/>
            <person name="Yao M."/>
            <person name="Yamaguchi H."/>
            <person name="Tsukihara T."/>
            <person name="Shinzawa-Itoh K."/>
            <person name="Nakashima R."/>
            <person name="Yoshikawa S."/>
        </authorList>
    </citation>
    <scope>X-RAY CRYSTALLOGRAPHY (2.9 ANGSTROMS)</scope>
    <source>
        <tissue>Heart</tissue>
    </source>
</reference>
<reference key="12">
    <citation type="journal article" date="2010" name="Proc. Natl. Acad. Sci. U.S.A.">
        <title>Bovine cytochrome c oxidase structures enable O2 reduction with minimization of reactive oxygens and provide a proton-pumping gate.</title>
        <authorList>
            <person name="Muramoto K."/>
            <person name="Ohta K."/>
            <person name="Shinzawa-Itoh K."/>
            <person name="Kanda K."/>
            <person name="Taniguchi M."/>
            <person name="Nabekura H."/>
            <person name="Yamashita E."/>
            <person name="Tsukihara T."/>
            <person name="Yoshikawa S."/>
        </authorList>
    </citation>
    <scope>X-RAY CRYSTALLOGRAPHY (1.80 ANGSTROMS)</scope>
</reference>
<reference key="13">
    <citation type="journal article" date="2016" name="Elife">
        <title>Functional asymmetry and electron flow in the bovine respirasome.</title>
        <authorList>
            <person name="Sousa J.S."/>
            <person name="Mills D.J."/>
            <person name="Vonck J."/>
            <person name="Kuehlbrandt W."/>
        </authorList>
    </citation>
    <scope>STRUCTURE BY ELECTRON MICROSCOPY (9.10 ANGSTROMS)</scope>
</reference>
<reference key="14">
    <citation type="journal article" date="2016" name="J. Biol. Chem.">
        <title>The Mg2+-containing water cluster of mammalian cytochrome c oxidase collects four pumping proton equivalents in each catalytic cycle.</title>
        <authorList>
            <person name="Yano N."/>
            <person name="Muramoto K."/>
            <person name="Shimada A."/>
            <person name="Takemura S."/>
            <person name="Baba J."/>
            <person name="Fujisawa H."/>
            <person name="Mochizuki M."/>
            <person name="Shinzawa-Itoh K."/>
            <person name="Yamashita E."/>
            <person name="Tsukihara T."/>
            <person name="Yoshikawa S."/>
        </authorList>
    </citation>
    <scope>X-RAY CRYSTALLOGRAPHY (1.50 ANGSTROMS)</scope>
</reference>
<reference key="15">
    <citation type="journal article" date="2019" name="Proc. Natl. Acad. Sci. U.S.A.">
        <title>Monomeric structure of an active form of bovine cytochrome c oxidase.</title>
        <authorList>
            <person name="Shinzawa-Itoh K."/>
            <person name="Sugimura T."/>
            <person name="Misaki T."/>
            <person name="Tadehara Y."/>
            <person name="Yamamoto S."/>
            <person name="Hanada M."/>
            <person name="Yano N."/>
            <person name="Nakagawa T."/>
            <person name="Uene S."/>
            <person name="Yamada T."/>
            <person name="Aoyama H."/>
            <person name="Yamashita E."/>
            <person name="Tsukihara T."/>
            <person name="Yoshikawa S."/>
            <person name="Muramoto K."/>
        </authorList>
    </citation>
    <scope>X-RAY CRYSTALLOGRAPHY (1.85 ANGSTROMS)</scope>
</reference>
<gene>
    <name type="primary">COX7C</name>
    <name type="synonym">COX7CP1</name>
</gene>
<evidence type="ECO:0000250" key="1">
    <source>
        <dbReference type="UniProtKB" id="P04039"/>
    </source>
</evidence>
<evidence type="ECO:0000250" key="2">
    <source>
        <dbReference type="UniProtKB" id="P15954"/>
    </source>
</evidence>
<evidence type="ECO:0000250" key="3">
    <source>
        <dbReference type="UniProtKB" id="P17665"/>
    </source>
</evidence>
<evidence type="ECO:0000269" key="4">
    <source>
    </source>
</evidence>
<evidence type="ECO:0000269" key="5">
    <source>
    </source>
</evidence>
<evidence type="ECO:0000269" key="6">
    <source>
    </source>
</evidence>
<evidence type="ECO:0000269" key="7">
    <source>
    </source>
</evidence>
<evidence type="ECO:0000269" key="8">
    <source>
    </source>
</evidence>
<evidence type="ECO:0000269" key="9">
    <source>
    </source>
</evidence>
<evidence type="ECO:0000269" key="10">
    <source>
    </source>
</evidence>
<evidence type="ECO:0000305" key="11"/>
<evidence type="ECO:0007829" key="12">
    <source>
        <dbReference type="PDB" id="7COH"/>
    </source>
</evidence>